<gene>
    <name evidence="1" type="primary">dcd</name>
    <name type="ordered locus">RB3427</name>
</gene>
<organism>
    <name type="scientific">Rhodopirellula baltica (strain DSM 10527 / NCIMB 13988 / SH1)</name>
    <dbReference type="NCBI Taxonomy" id="243090"/>
    <lineage>
        <taxon>Bacteria</taxon>
        <taxon>Pseudomonadati</taxon>
        <taxon>Planctomycetota</taxon>
        <taxon>Planctomycetia</taxon>
        <taxon>Pirellulales</taxon>
        <taxon>Pirellulaceae</taxon>
        <taxon>Rhodopirellula</taxon>
    </lineage>
</organism>
<sequence length="198" mass="22297">MKETPIMILSGQDIQSRLGKDIVIDPFDPSRLSPNSYNLTLHDELLVYEEVVLDAASPNRYRRLPIPEEGLTLQPGTLYLGRTTEHTETHGLVPIIQGRSSLGRLGLFLNPGGSLGHAGYRGTWTLELHCVQPVRIYPHIQICQITYWEVSGDSPEEASEKYQNSNDIQPSLMHRELGYDDRDTQLELGFDEAIRSTP</sequence>
<proteinExistence type="inferred from homology"/>
<keyword id="KW-0378">Hydrolase</keyword>
<keyword id="KW-0546">Nucleotide metabolism</keyword>
<keyword id="KW-0547">Nucleotide-binding</keyword>
<keyword id="KW-1185">Reference proteome</keyword>
<reference key="1">
    <citation type="journal article" date="2003" name="Proc. Natl. Acad. Sci. U.S.A.">
        <title>Complete genome sequence of the marine planctomycete Pirellula sp. strain 1.</title>
        <authorList>
            <person name="Gloeckner F.O."/>
            <person name="Kube M."/>
            <person name="Bauer M."/>
            <person name="Teeling H."/>
            <person name="Lombardot T."/>
            <person name="Ludwig W."/>
            <person name="Gade D."/>
            <person name="Beck A."/>
            <person name="Borzym K."/>
            <person name="Heitmann K."/>
            <person name="Rabus R."/>
            <person name="Schlesner H."/>
            <person name="Amann R."/>
            <person name="Reinhardt R."/>
        </authorList>
    </citation>
    <scope>NUCLEOTIDE SEQUENCE [LARGE SCALE GENOMIC DNA]</scope>
    <source>
        <strain>DSM 10527 / NCIMB 13988 / SH1</strain>
    </source>
</reference>
<protein>
    <recommendedName>
        <fullName evidence="1">dCTP deaminase</fullName>
        <ecNumber evidence="1">3.5.4.13</ecNumber>
    </recommendedName>
    <alternativeName>
        <fullName evidence="1">Deoxycytidine triphosphate deaminase</fullName>
    </alternativeName>
</protein>
<feature type="chain" id="PRO_0000156007" description="dCTP deaminase">
    <location>
        <begin position="1"/>
        <end position="198"/>
    </location>
</feature>
<feature type="active site" description="Proton donor/acceptor" evidence="1">
    <location>
        <position position="127"/>
    </location>
</feature>
<feature type="binding site" evidence="1">
    <location>
        <begin position="99"/>
        <end position="104"/>
    </location>
    <ligand>
        <name>dCTP</name>
        <dbReference type="ChEBI" id="CHEBI:61481"/>
    </ligand>
</feature>
<feature type="binding site" evidence="1">
    <location>
        <begin position="125"/>
        <end position="127"/>
    </location>
    <ligand>
        <name>dCTP</name>
        <dbReference type="ChEBI" id="CHEBI:61481"/>
    </ligand>
</feature>
<feature type="binding site" evidence="1">
    <location>
        <position position="144"/>
    </location>
    <ligand>
        <name>dCTP</name>
        <dbReference type="ChEBI" id="CHEBI:61481"/>
    </ligand>
</feature>
<name>DCD_RHOBA</name>
<evidence type="ECO:0000255" key="1">
    <source>
        <dbReference type="HAMAP-Rule" id="MF_00146"/>
    </source>
</evidence>
<comment type="function">
    <text evidence="1">Catalyzes the deamination of dCTP to dUTP.</text>
</comment>
<comment type="catalytic activity">
    <reaction evidence="1">
        <text>dCTP + H2O + H(+) = dUTP + NH4(+)</text>
        <dbReference type="Rhea" id="RHEA:22680"/>
        <dbReference type="ChEBI" id="CHEBI:15377"/>
        <dbReference type="ChEBI" id="CHEBI:15378"/>
        <dbReference type="ChEBI" id="CHEBI:28938"/>
        <dbReference type="ChEBI" id="CHEBI:61481"/>
        <dbReference type="ChEBI" id="CHEBI:61555"/>
        <dbReference type="EC" id="3.5.4.13"/>
    </reaction>
</comment>
<comment type="pathway">
    <text evidence="1">Pyrimidine metabolism; dUMP biosynthesis; dUMP from dCTP (dUTP route): step 1/2.</text>
</comment>
<comment type="subunit">
    <text evidence="1">Homotrimer.</text>
</comment>
<comment type="similarity">
    <text evidence="1">Belongs to the dCTP deaminase family.</text>
</comment>
<accession>Q7UU94</accession>
<dbReference type="EC" id="3.5.4.13" evidence="1"/>
<dbReference type="EMBL" id="BX294138">
    <property type="protein sequence ID" value="CAD73188.1"/>
    <property type="molecule type" value="Genomic_DNA"/>
</dbReference>
<dbReference type="RefSeq" id="NP_865504.1">
    <property type="nucleotide sequence ID" value="NC_005027.1"/>
</dbReference>
<dbReference type="RefSeq" id="WP_011119358.1">
    <property type="nucleotide sequence ID" value="NC_005027.1"/>
</dbReference>
<dbReference type="SMR" id="Q7UU94"/>
<dbReference type="STRING" id="243090.RB3427"/>
<dbReference type="EnsemblBacteria" id="CAD73188">
    <property type="protein sequence ID" value="CAD73188"/>
    <property type="gene ID" value="RB3427"/>
</dbReference>
<dbReference type="KEGG" id="rba:RB3427"/>
<dbReference type="PATRIC" id="fig|243090.15.peg.1582"/>
<dbReference type="eggNOG" id="COG0717">
    <property type="taxonomic scope" value="Bacteria"/>
</dbReference>
<dbReference type="HOGENOM" id="CLU_087476_0_1_0"/>
<dbReference type="InParanoid" id="Q7UU94"/>
<dbReference type="OrthoDB" id="9780202at2"/>
<dbReference type="UniPathway" id="UPA00610">
    <property type="reaction ID" value="UER00665"/>
</dbReference>
<dbReference type="Proteomes" id="UP000001025">
    <property type="component" value="Chromosome"/>
</dbReference>
<dbReference type="GO" id="GO:0008829">
    <property type="term" value="F:dCTP deaminase activity"/>
    <property type="evidence" value="ECO:0000318"/>
    <property type="project" value="GO_Central"/>
</dbReference>
<dbReference type="GO" id="GO:0000166">
    <property type="term" value="F:nucleotide binding"/>
    <property type="evidence" value="ECO:0007669"/>
    <property type="project" value="UniProtKB-KW"/>
</dbReference>
<dbReference type="GO" id="GO:0006226">
    <property type="term" value="P:dUMP biosynthetic process"/>
    <property type="evidence" value="ECO:0007669"/>
    <property type="project" value="UniProtKB-UniPathway"/>
</dbReference>
<dbReference type="GO" id="GO:0006229">
    <property type="term" value="P:dUTP biosynthetic process"/>
    <property type="evidence" value="ECO:0007669"/>
    <property type="project" value="UniProtKB-UniRule"/>
</dbReference>
<dbReference type="GO" id="GO:0015949">
    <property type="term" value="P:nucleobase-containing small molecule interconversion"/>
    <property type="evidence" value="ECO:0000318"/>
    <property type="project" value="GO_Central"/>
</dbReference>
<dbReference type="CDD" id="cd07557">
    <property type="entry name" value="trimeric_dUTPase"/>
    <property type="match status" value="1"/>
</dbReference>
<dbReference type="Gene3D" id="2.70.40.10">
    <property type="match status" value="1"/>
</dbReference>
<dbReference type="HAMAP" id="MF_00146">
    <property type="entry name" value="dCTP_deaminase"/>
    <property type="match status" value="1"/>
</dbReference>
<dbReference type="InterPro" id="IPR011962">
    <property type="entry name" value="dCTP_deaminase"/>
</dbReference>
<dbReference type="InterPro" id="IPR036157">
    <property type="entry name" value="dUTPase-like_sf"/>
</dbReference>
<dbReference type="InterPro" id="IPR033704">
    <property type="entry name" value="dUTPase_trimeric"/>
</dbReference>
<dbReference type="PANTHER" id="PTHR42680">
    <property type="entry name" value="DCTP DEAMINASE"/>
    <property type="match status" value="1"/>
</dbReference>
<dbReference type="PANTHER" id="PTHR42680:SF3">
    <property type="entry name" value="DCTP DEAMINASE"/>
    <property type="match status" value="1"/>
</dbReference>
<dbReference type="Pfam" id="PF22769">
    <property type="entry name" value="DCD"/>
    <property type="match status" value="1"/>
</dbReference>
<dbReference type="SUPFAM" id="SSF51283">
    <property type="entry name" value="dUTPase-like"/>
    <property type="match status" value="1"/>
</dbReference>